<name>GATA_PROMA</name>
<accession>Q7VCJ0</accession>
<sequence>MSIAKWRQKLNKGEVSSLELINQQINRIEEVENTLHSYLYLNHEKARASAIKIDEARAAGEELPPLAGVPFAIKDNLCTKGIPTTCSSKMLEEFIPPYESTVTQRLWKAGGILLGKTNLDEFAMGSSTETSAFGPTKNPWDITRVPGGSSGGSAAAVASGLCTAALGSDTGGSIRQPASFCGVVGLKPTYGRVSRWGLIAFASSLDQVGPFSTNVSDAAEILQVIAGHDPRDSTCLDVPVPKYSDHISESISGLRIGLIKECFDQEGLDLEVKKSVLKAADQLQSLGAELIEVSCPRFTDGIATYYVIAPSEASANLARYDGVKYGYRAKEVDNLSDMTAFTRARGFGSEVQRRILIGTYALSAGYVDAYYRKAQQVRTLIRRDFENAFKNVDILLTPTSPTTAFKSGAHQNDPLAMYLSDLLTIPANLAGLPSISLPCGFDEKALPIGLQLIANVLDETRLLQVAHQYEQAAEIMNSAPESSLIN</sequence>
<proteinExistence type="inferred from homology"/>
<evidence type="ECO:0000255" key="1">
    <source>
        <dbReference type="HAMAP-Rule" id="MF_00120"/>
    </source>
</evidence>
<organism>
    <name type="scientific">Prochlorococcus marinus (strain SARG / CCMP1375 / SS120)</name>
    <dbReference type="NCBI Taxonomy" id="167539"/>
    <lineage>
        <taxon>Bacteria</taxon>
        <taxon>Bacillati</taxon>
        <taxon>Cyanobacteriota</taxon>
        <taxon>Cyanophyceae</taxon>
        <taxon>Synechococcales</taxon>
        <taxon>Prochlorococcaceae</taxon>
        <taxon>Prochlorococcus</taxon>
    </lineage>
</organism>
<dbReference type="EC" id="6.3.5.7" evidence="1"/>
<dbReference type="EMBL" id="AE017126">
    <property type="protein sequence ID" value="AAP99794.1"/>
    <property type="molecule type" value="Genomic_DNA"/>
</dbReference>
<dbReference type="RefSeq" id="NP_875142.1">
    <property type="nucleotide sequence ID" value="NC_005042.1"/>
</dbReference>
<dbReference type="RefSeq" id="WP_011124902.1">
    <property type="nucleotide sequence ID" value="NC_005042.1"/>
</dbReference>
<dbReference type="SMR" id="Q7VCJ0"/>
<dbReference type="STRING" id="167539.Pro_0750"/>
<dbReference type="EnsemblBacteria" id="AAP99794">
    <property type="protein sequence ID" value="AAP99794"/>
    <property type="gene ID" value="Pro_0750"/>
</dbReference>
<dbReference type="KEGG" id="pma:Pro_0750"/>
<dbReference type="PATRIC" id="fig|167539.5.peg.793"/>
<dbReference type="eggNOG" id="COG0154">
    <property type="taxonomic scope" value="Bacteria"/>
</dbReference>
<dbReference type="HOGENOM" id="CLU_009600_0_3_3"/>
<dbReference type="OrthoDB" id="9811471at2"/>
<dbReference type="Proteomes" id="UP000001420">
    <property type="component" value="Chromosome"/>
</dbReference>
<dbReference type="GO" id="GO:0030956">
    <property type="term" value="C:glutamyl-tRNA(Gln) amidotransferase complex"/>
    <property type="evidence" value="ECO:0007669"/>
    <property type="project" value="InterPro"/>
</dbReference>
<dbReference type="GO" id="GO:0005524">
    <property type="term" value="F:ATP binding"/>
    <property type="evidence" value="ECO:0007669"/>
    <property type="project" value="UniProtKB-KW"/>
</dbReference>
<dbReference type="GO" id="GO:0050567">
    <property type="term" value="F:glutaminyl-tRNA synthase (glutamine-hydrolyzing) activity"/>
    <property type="evidence" value="ECO:0007669"/>
    <property type="project" value="UniProtKB-UniRule"/>
</dbReference>
<dbReference type="GO" id="GO:0006412">
    <property type="term" value="P:translation"/>
    <property type="evidence" value="ECO:0007669"/>
    <property type="project" value="UniProtKB-UniRule"/>
</dbReference>
<dbReference type="Gene3D" id="3.90.1300.10">
    <property type="entry name" value="Amidase signature (AS) domain"/>
    <property type="match status" value="1"/>
</dbReference>
<dbReference type="HAMAP" id="MF_00120">
    <property type="entry name" value="GatA"/>
    <property type="match status" value="1"/>
</dbReference>
<dbReference type="InterPro" id="IPR000120">
    <property type="entry name" value="Amidase"/>
</dbReference>
<dbReference type="InterPro" id="IPR020556">
    <property type="entry name" value="Amidase_CS"/>
</dbReference>
<dbReference type="InterPro" id="IPR023631">
    <property type="entry name" value="Amidase_dom"/>
</dbReference>
<dbReference type="InterPro" id="IPR036928">
    <property type="entry name" value="AS_sf"/>
</dbReference>
<dbReference type="InterPro" id="IPR004412">
    <property type="entry name" value="GatA"/>
</dbReference>
<dbReference type="NCBIfam" id="TIGR00132">
    <property type="entry name" value="gatA"/>
    <property type="match status" value="1"/>
</dbReference>
<dbReference type="PANTHER" id="PTHR11895:SF151">
    <property type="entry name" value="GLUTAMYL-TRNA(GLN) AMIDOTRANSFERASE SUBUNIT A"/>
    <property type="match status" value="1"/>
</dbReference>
<dbReference type="PANTHER" id="PTHR11895">
    <property type="entry name" value="TRANSAMIDASE"/>
    <property type="match status" value="1"/>
</dbReference>
<dbReference type="Pfam" id="PF01425">
    <property type="entry name" value="Amidase"/>
    <property type="match status" value="1"/>
</dbReference>
<dbReference type="SUPFAM" id="SSF75304">
    <property type="entry name" value="Amidase signature (AS) enzymes"/>
    <property type="match status" value="1"/>
</dbReference>
<dbReference type="PROSITE" id="PS00571">
    <property type="entry name" value="AMIDASES"/>
    <property type="match status" value="1"/>
</dbReference>
<feature type="chain" id="PRO_0000105186" description="Glutamyl-tRNA(Gln) amidotransferase subunit A">
    <location>
        <begin position="1"/>
        <end position="486"/>
    </location>
</feature>
<feature type="active site" description="Charge relay system" evidence="1">
    <location>
        <position position="74"/>
    </location>
</feature>
<feature type="active site" description="Charge relay system" evidence="1">
    <location>
        <position position="149"/>
    </location>
</feature>
<feature type="active site" description="Acyl-ester intermediate" evidence="1">
    <location>
        <position position="173"/>
    </location>
</feature>
<reference key="1">
    <citation type="journal article" date="2003" name="Proc. Natl. Acad. Sci. U.S.A.">
        <title>Genome sequence of the cyanobacterium Prochlorococcus marinus SS120, a nearly minimal oxyphototrophic genome.</title>
        <authorList>
            <person name="Dufresne A."/>
            <person name="Salanoubat M."/>
            <person name="Partensky F."/>
            <person name="Artiguenave F."/>
            <person name="Axmann I.M."/>
            <person name="Barbe V."/>
            <person name="Duprat S."/>
            <person name="Galperin M.Y."/>
            <person name="Koonin E.V."/>
            <person name="Le Gall F."/>
            <person name="Makarova K.S."/>
            <person name="Ostrowski M."/>
            <person name="Oztas S."/>
            <person name="Robert C."/>
            <person name="Rogozin I.B."/>
            <person name="Scanlan D.J."/>
            <person name="Tandeau de Marsac N."/>
            <person name="Weissenbach J."/>
            <person name="Wincker P."/>
            <person name="Wolf Y.I."/>
            <person name="Hess W.R."/>
        </authorList>
    </citation>
    <scope>NUCLEOTIDE SEQUENCE [LARGE SCALE GENOMIC DNA]</scope>
    <source>
        <strain>SARG / CCMP1375 / SS120</strain>
    </source>
</reference>
<keyword id="KW-0067">ATP-binding</keyword>
<keyword id="KW-0436">Ligase</keyword>
<keyword id="KW-0547">Nucleotide-binding</keyword>
<keyword id="KW-0648">Protein biosynthesis</keyword>
<keyword id="KW-1185">Reference proteome</keyword>
<protein>
    <recommendedName>
        <fullName evidence="1">Glutamyl-tRNA(Gln) amidotransferase subunit A</fullName>
        <shortName evidence="1">Glu-ADT subunit A</shortName>
        <ecNumber evidence="1">6.3.5.7</ecNumber>
    </recommendedName>
</protein>
<comment type="function">
    <text evidence="1">Allows the formation of correctly charged Gln-tRNA(Gln) through the transamidation of misacylated Glu-tRNA(Gln) in organisms which lack glutaminyl-tRNA synthetase. The reaction takes place in the presence of glutamine and ATP through an activated gamma-phospho-Glu-tRNA(Gln).</text>
</comment>
<comment type="catalytic activity">
    <reaction evidence="1">
        <text>L-glutamyl-tRNA(Gln) + L-glutamine + ATP + H2O = L-glutaminyl-tRNA(Gln) + L-glutamate + ADP + phosphate + H(+)</text>
        <dbReference type="Rhea" id="RHEA:17521"/>
        <dbReference type="Rhea" id="RHEA-COMP:9681"/>
        <dbReference type="Rhea" id="RHEA-COMP:9684"/>
        <dbReference type="ChEBI" id="CHEBI:15377"/>
        <dbReference type="ChEBI" id="CHEBI:15378"/>
        <dbReference type="ChEBI" id="CHEBI:29985"/>
        <dbReference type="ChEBI" id="CHEBI:30616"/>
        <dbReference type="ChEBI" id="CHEBI:43474"/>
        <dbReference type="ChEBI" id="CHEBI:58359"/>
        <dbReference type="ChEBI" id="CHEBI:78520"/>
        <dbReference type="ChEBI" id="CHEBI:78521"/>
        <dbReference type="ChEBI" id="CHEBI:456216"/>
        <dbReference type="EC" id="6.3.5.7"/>
    </reaction>
</comment>
<comment type="subunit">
    <text evidence="1">Heterotrimer of A, B and C subunits.</text>
</comment>
<comment type="similarity">
    <text evidence="1">Belongs to the amidase family. GatA subfamily.</text>
</comment>
<gene>
    <name evidence="1" type="primary">gatA</name>
    <name type="ordered locus">Pro_0750</name>
</gene>